<protein>
    <recommendedName>
        <fullName evidence="2">8-oxo-(d)GTP phosphatase</fullName>
        <shortName evidence="2">8-oxo-(d)GTPase</shortName>
        <ecNumber evidence="2">3.6.1.69</ecNumber>
    </recommendedName>
</protein>
<evidence type="ECO:0000250" key="1">
    <source>
        <dbReference type="UniProtKB" id="A0QUZ2"/>
    </source>
</evidence>
<evidence type="ECO:0000250" key="2">
    <source>
        <dbReference type="UniProtKB" id="P9WIY3"/>
    </source>
</evidence>
<evidence type="ECO:0000255" key="3">
    <source>
        <dbReference type="PROSITE-ProRule" id="PRU00794"/>
    </source>
</evidence>
<evidence type="ECO:0000305" key="4"/>
<comment type="function">
    <text evidence="2">Catalyzes the conversion of 8-oxo-dGTP to 8-oxo-dGDP, and 8-oxo-GTP to 8-oxo-GDP.</text>
</comment>
<comment type="catalytic activity">
    <reaction evidence="2">
        <text>8-oxo-dGTP + H2O = 8-oxo-dGDP + phosphate + H(+)</text>
        <dbReference type="Rhea" id="RHEA:59980"/>
        <dbReference type="ChEBI" id="CHEBI:15377"/>
        <dbReference type="ChEBI" id="CHEBI:15378"/>
        <dbReference type="ChEBI" id="CHEBI:43474"/>
        <dbReference type="ChEBI" id="CHEBI:63715"/>
        <dbReference type="ChEBI" id="CHEBI:77896"/>
        <dbReference type="EC" id="3.6.1.69"/>
    </reaction>
</comment>
<comment type="catalytic activity">
    <reaction evidence="2">
        <text>8-oxo-GTP + H2O = 8-oxo-GDP + phosphate + H(+)</text>
        <dbReference type="Rhea" id="RHEA:60032"/>
        <dbReference type="ChEBI" id="CHEBI:15377"/>
        <dbReference type="ChEBI" id="CHEBI:15378"/>
        <dbReference type="ChEBI" id="CHEBI:43474"/>
        <dbReference type="ChEBI" id="CHEBI:143553"/>
        <dbReference type="ChEBI" id="CHEBI:143554"/>
        <dbReference type="EC" id="3.6.1.69"/>
    </reaction>
</comment>
<comment type="cofactor">
    <cofactor evidence="1">
        <name>Mg(2+)</name>
        <dbReference type="ChEBI" id="CHEBI:18420"/>
    </cofactor>
</comment>
<comment type="similarity">
    <text evidence="4">Belongs to the Nudix hydrolase family.</text>
</comment>
<accession>P9WIY2</accession>
<accession>L0TB80</accession>
<accession>P95110</accession>
<accession>Q7D6B2</accession>
<proteinExistence type="inferred from homology"/>
<reference key="1">
    <citation type="journal article" date="2002" name="J. Bacteriol.">
        <title>Whole-genome comparison of Mycobacterium tuberculosis clinical and laboratory strains.</title>
        <authorList>
            <person name="Fleischmann R.D."/>
            <person name="Alland D."/>
            <person name="Eisen J.A."/>
            <person name="Carpenter L."/>
            <person name="White O."/>
            <person name="Peterson J.D."/>
            <person name="DeBoy R.T."/>
            <person name="Dodson R.J."/>
            <person name="Gwinn M.L."/>
            <person name="Haft D.H."/>
            <person name="Hickey E.K."/>
            <person name="Kolonay J.F."/>
            <person name="Nelson W.C."/>
            <person name="Umayam L.A."/>
            <person name="Ermolaeva M.D."/>
            <person name="Salzberg S.L."/>
            <person name="Delcher A."/>
            <person name="Utterback T.R."/>
            <person name="Weidman J.F."/>
            <person name="Khouri H.M."/>
            <person name="Gill J."/>
            <person name="Mikula A."/>
            <person name="Bishai W."/>
            <person name="Jacobs W.R. Jr."/>
            <person name="Venter J.C."/>
            <person name="Fraser C.M."/>
        </authorList>
    </citation>
    <scope>NUCLEOTIDE SEQUENCE [LARGE SCALE GENOMIC DNA]</scope>
    <source>
        <strain>CDC 1551 / Oshkosh</strain>
    </source>
</reference>
<feature type="chain" id="PRO_0000427925" description="8-oxo-(d)GTP phosphatase">
    <location>
        <begin position="1"/>
        <end position="317"/>
    </location>
</feature>
<feature type="domain" description="Nudix hydrolase" evidence="3">
    <location>
        <begin position="15"/>
        <end position="148"/>
    </location>
</feature>
<feature type="short sequence motif" description="Nudix box" evidence="3">
    <location>
        <begin position="54"/>
        <end position="75"/>
    </location>
</feature>
<feature type="binding site" evidence="1">
    <location>
        <begin position="43"/>
        <end position="46"/>
    </location>
    <ligand>
        <name>substrate</name>
    </ligand>
</feature>
<feature type="binding site" evidence="1">
    <location>
        <position position="48"/>
    </location>
    <ligand>
        <name>substrate</name>
    </ligand>
</feature>
<feature type="binding site" evidence="1">
    <location>
        <begin position="53"/>
        <end position="55"/>
    </location>
    <ligand>
        <name>substrate</name>
    </ligand>
</feature>
<feature type="binding site" evidence="1">
    <location>
        <position position="53"/>
    </location>
    <ligand>
        <name>Mg(2+)</name>
        <dbReference type="ChEBI" id="CHEBI:18420"/>
        <label>1</label>
    </ligand>
</feature>
<feature type="binding site" evidence="1">
    <location>
        <position position="69"/>
    </location>
    <ligand>
        <name>Mg(2+)</name>
        <dbReference type="ChEBI" id="CHEBI:18420"/>
        <label>2</label>
    </ligand>
</feature>
<feature type="binding site" evidence="1">
    <location>
        <position position="73"/>
    </location>
    <ligand>
        <name>Mg(2+)</name>
        <dbReference type="ChEBI" id="CHEBI:18420"/>
        <label>1</label>
    </ligand>
</feature>
<feature type="binding site" evidence="1">
    <location>
        <position position="73"/>
    </location>
    <ligand>
        <name>Mg(2+)</name>
        <dbReference type="ChEBI" id="CHEBI:18420"/>
        <label>2</label>
    </ligand>
</feature>
<feature type="binding site" evidence="1">
    <location>
        <position position="89"/>
    </location>
    <ligand>
        <name>substrate</name>
    </ligand>
</feature>
<feature type="binding site" evidence="1">
    <location>
        <position position="99"/>
    </location>
    <ligand>
        <name>substrate</name>
    </ligand>
</feature>
<feature type="binding site" evidence="1">
    <location>
        <position position="118"/>
    </location>
    <ligand>
        <name>Mg(2+)</name>
        <dbReference type="ChEBI" id="CHEBI:18420"/>
        <label>1</label>
    </ligand>
</feature>
<feature type="binding site" evidence="1">
    <location>
        <position position="118"/>
    </location>
    <ligand>
        <name>Mg(2+)</name>
        <dbReference type="ChEBI" id="CHEBI:18420"/>
        <label>2</label>
    </ligand>
</feature>
<feature type="binding site" evidence="1">
    <location>
        <position position="118"/>
    </location>
    <ligand>
        <name>substrate</name>
    </ligand>
</feature>
<feature type="binding site" evidence="1">
    <location>
        <position position="136"/>
    </location>
    <ligand>
        <name>substrate</name>
    </ligand>
</feature>
<keyword id="KW-0227">DNA damage</keyword>
<keyword id="KW-0234">DNA repair</keyword>
<keyword id="KW-0235">DNA replication</keyword>
<keyword id="KW-0378">Hydrolase</keyword>
<keyword id="KW-0460">Magnesium</keyword>
<keyword id="KW-0479">Metal-binding</keyword>
<keyword id="KW-1185">Reference proteome</keyword>
<gene>
    <name evidence="2" type="primary">mutT1</name>
    <name type="ordered locus">MT3063</name>
</gene>
<organism>
    <name type="scientific">Mycobacterium tuberculosis (strain CDC 1551 / Oshkosh)</name>
    <dbReference type="NCBI Taxonomy" id="83331"/>
    <lineage>
        <taxon>Bacteria</taxon>
        <taxon>Bacillati</taxon>
        <taxon>Actinomycetota</taxon>
        <taxon>Actinomycetes</taxon>
        <taxon>Mycobacteriales</taxon>
        <taxon>Mycobacteriaceae</taxon>
        <taxon>Mycobacterium</taxon>
        <taxon>Mycobacterium tuberculosis complex</taxon>
    </lineage>
</organism>
<sequence>MSIQNSSARRRSAGRIVYAAGAVLWRPGSADSEGPVEIAVIHRPRYDDWSLPKGKVDPGETAPVGAVREILEETGHRANLGRRLLTVTYPTDSPFRGVKKVHYWAARSTGGEFTPGSEVDELIWLPVPDAMNKLDYAQDRKVLCRFAKHPADTQTVLVVRHGTAGSKAHFSGDDSKRPLDKRGRAQAEALVPQLLAFGATDVYAADRVRCHQTMEPLAAELNVTIHNEPTLTEESYANNPKRGRHRVLQIVEQVGTPVICTQGKVIPDLITWWCERDGVHPDKSRNRKGSTWVLSLSAGRLVTADHIGGALAANVRA</sequence>
<name>MUTT1_MYCTO</name>
<dbReference type="EC" id="3.6.1.69" evidence="2"/>
<dbReference type="EMBL" id="AE000516">
    <property type="protein sequence ID" value="AAK47392.1"/>
    <property type="molecule type" value="Genomic_DNA"/>
</dbReference>
<dbReference type="PIR" id="F70673">
    <property type="entry name" value="F70673"/>
</dbReference>
<dbReference type="RefSeq" id="WP_003899569.1">
    <property type="nucleotide sequence ID" value="NZ_KK341227.1"/>
</dbReference>
<dbReference type="SMR" id="P9WIY2"/>
<dbReference type="KEGG" id="mtc:MT3063"/>
<dbReference type="PATRIC" id="fig|83331.31.peg.3306"/>
<dbReference type="HOGENOM" id="CLU_048989_0_0_11"/>
<dbReference type="Proteomes" id="UP000001020">
    <property type="component" value="Chromosome"/>
</dbReference>
<dbReference type="GO" id="GO:0008413">
    <property type="term" value="F:8-oxo-7,8-dihydroguanosine triphosphate pyrophosphatase activity"/>
    <property type="evidence" value="ECO:0007669"/>
    <property type="project" value="UniProtKB-EC"/>
</dbReference>
<dbReference type="GO" id="GO:0046872">
    <property type="term" value="F:metal ion binding"/>
    <property type="evidence" value="ECO:0007669"/>
    <property type="project" value="UniProtKB-KW"/>
</dbReference>
<dbReference type="GO" id="GO:0006281">
    <property type="term" value="P:DNA repair"/>
    <property type="evidence" value="ECO:0007669"/>
    <property type="project" value="UniProtKB-KW"/>
</dbReference>
<dbReference type="GO" id="GO:0006260">
    <property type="term" value="P:DNA replication"/>
    <property type="evidence" value="ECO:0007669"/>
    <property type="project" value="UniProtKB-KW"/>
</dbReference>
<dbReference type="CDD" id="cd07067">
    <property type="entry name" value="HP_PGM_like"/>
    <property type="match status" value="1"/>
</dbReference>
<dbReference type="CDD" id="cd03673">
    <property type="entry name" value="NUDIX_Ap6A_hydrolase"/>
    <property type="match status" value="1"/>
</dbReference>
<dbReference type="Gene3D" id="3.90.79.10">
    <property type="entry name" value="Nucleoside Triphosphate Pyrophosphohydrolase"/>
    <property type="match status" value="1"/>
</dbReference>
<dbReference type="Gene3D" id="3.40.50.1240">
    <property type="entry name" value="Phosphoglycerate mutase-like"/>
    <property type="match status" value="1"/>
</dbReference>
<dbReference type="InterPro" id="IPR013078">
    <property type="entry name" value="His_Pase_superF_clade-1"/>
</dbReference>
<dbReference type="InterPro" id="IPR029033">
    <property type="entry name" value="His_PPase_superfam"/>
</dbReference>
<dbReference type="InterPro" id="IPR020476">
    <property type="entry name" value="Nudix_hydrolase"/>
</dbReference>
<dbReference type="InterPro" id="IPR015797">
    <property type="entry name" value="NUDIX_hydrolase-like_dom_sf"/>
</dbReference>
<dbReference type="InterPro" id="IPR020084">
    <property type="entry name" value="NUDIX_hydrolase_CS"/>
</dbReference>
<dbReference type="InterPro" id="IPR000086">
    <property type="entry name" value="NUDIX_hydrolase_dom"/>
</dbReference>
<dbReference type="PANTHER" id="PTHR43222:SF9">
    <property type="entry name" value="8-OXO-(D)GTP PHOSPHATASE"/>
    <property type="match status" value="1"/>
</dbReference>
<dbReference type="PANTHER" id="PTHR43222">
    <property type="entry name" value="NUDIX HYDROLASE 23"/>
    <property type="match status" value="1"/>
</dbReference>
<dbReference type="Pfam" id="PF00300">
    <property type="entry name" value="His_Phos_1"/>
    <property type="match status" value="1"/>
</dbReference>
<dbReference type="Pfam" id="PF00293">
    <property type="entry name" value="NUDIX"/>
    <property type="match status" value="1"/>
</dbReference>
<dbReference type="PRINTS" id="PR00502">
    <property type="entry name" value="NUDIXFAMILY"/>
</dbReference>
<dbReference type="SMART" id="SM00855">
    <property type="entry name" value="PGAM"/>
    <property type="match status" value="1"/>
</dbReference>
<dbReference type="SUPFAM" id="SSF55811">
    <property type="entry name" value="Nudix"/>
    <property type="match status" value="1"/>
</dbReference>
<dbReference type="SUPFAM" id="SSF53254">
    <property type="entry name" value="Phosphoglycerate mutase-like"/>
    <property type="match status" value="1"/>
</dbReference>
<dbReference type="PROSITE" id="PS51462">
    <property type="entry name" value="NUDIX"/>
    <property type="match status" value="1"/>
</dbReference>
<dbReference type="PROSITE" id="PS00893">
    <property type="entry name" value="NUDIX_BOX"/>
    <property type="match status" value="1"/>
</dbReference>